<sequence>MRSLSIFGATGSIGESTFDLVMRKGGPEAFRTVALTGGRNVARLAEMARALKAELAVTAHEECLPALREALAGSGTEVAGGTQAIAEAADRPADWTMSAIVGAAGLVPGMRALKHGRTLALANKESLVTAGQLLMRTAEENGATILPVDSEHSAVFQALAGEDTTCVERVIITASGGPFRDWTLEQIRGCTVAQAMAHPNWSMGQRISIDSASMFNKALELIETREFFGFEPERIEAVVHPQSIVHALVGFCDGGIMAHLGPADMRHAIGFALNWPGRGEVPVARLDLAQIANLTFQKPDEERFPALRLAREVMAARGLSGAAFNAAKEIALDHFIAGNIGFLDMAAVVEEALSAVSADPLFGKVPSTLEEVLAMDHLARKAAEEAASFRQQKR</sequence>
<proteinExistence type="inferred from homology"/>
<protein>
    <recommendedName>
        <fullName evidence="1">1-deoxy-D-xylulose 5-phosphate reductoisomerase</fullName>
        <shortName evidence="1">DXP reductoisomerase</shortName>
        <ecNumber evidence="1">1.1.1.267</ecNumber>
    </recommendedName>
    <alternativeName>
        <fullName evidence="1">1-deoxyxylulose-5-phosphate reductoisomerase</fullName>
    </alternativeName>
    <alternativeName>
        <fullName evidence="1">2-C-methyl-D-erythritol 4-phosphate synthase</fullName>
    </alternativeName>
</protein>
<name>DXR_CERS5</name>
<evidence type="ECO:0000255" key="1">
    <source>
        <dbReference type="HAMAP-Rule" id="MF_00183"/>
    </source>
</evidence>
<accession>A4WUH5</accession>
<organism>
    <name type="scientific">Cereibacter sphaeroides (strain ATCC 17025 / ATH 2.4.3)</name>
    <name type="common">Rhodobacter sphaeroides</name>
    <dbReference type="NCBI Taxonomy" id="349102"/>
    <lineage>
        <taxon>Bacteria</taxon>
        <taxon>Pseudomonadati</taxon>
        <taxon>Pseudomonadota</taxon>
        <taxon>Alphaproteobacteria</taxon>
        <taxon>Rhodobacterales</taxon>
        <taxon>Paracoccaceae</taxon>
        <taxon>Cereibacter</taxon>
    </lineage>
</organism>
<comment type="function">
    <text evidence="1">Catalyzes the NADPH-dependent rearrangement and reduction of 1-deoxy-D-xylulose-5-phosphate (DXP) to 2-C-methyl-D-erythritol 4-phosphate (MEP).</text>
</comment>
<comment type="catalytic activity">
    <reaction evidence="1">
        <text>2-C-methyl-D-erythritol 4-phosphate + NADP(+) = 1-deoxy-D-xylulose 5-phosphate + NADPH + H(+)</text>
        <dbReference type="Rhea" id="RHEA:13717"/>
        <dbReference type="ChEBI" id="CHEBI:15378"/>
        <dbReference type="ChEBI" id="CHEBI:57783"/>
        <dbReference type="ChEBI" id="CHEBI:57792"/>
        <dbReference type="ChEBI" id="CHEBI:58262"/>
        <dbReference type="ChEBI" id="CHEBI:58349"/>
        <dbReference type="EC" id="1.1.1.267"/>
    </reaction>
    <physiologicalReaction direction="right-to-left" evidence="1">
        <dbReference type="Rhea" id="RHEA:13719"/>
    </physiologicalReaction>
</comment>
<comment type="cofactor">
    <cofactor evidence="1">
        <name>Mg(2+)</name>
        <dbReference type="ChEBI" id="CHEBI:18420"/>
    </cofactor>
    <cofactor evidence="1">
        <name>Mn(2+)</name>
        <dbReference type="ChEBI" id="CHEBI:29035"/>
    </cofactor>
</comment>
<comment type="pathway">
    <text evidence="1">Isoprenoid biosynthesis; isopentenyl diphosphate biosynthesis via DXP pathway; isopentenyl diphosphate from 1-deoxy-D-xylulose 5-phosphate: step 1/6.</text>
</comment>
<comment type="similarity">
    <text evidence="1">Belongs to the DXR family.</text>
</comment>
<reference key="1">
    <citation type="submission" date="2007-04" db="EMBL/GenBank/DDBJ databases">
        <title>Complete sequence of chromosome of Rhodobacter sphaeroides ATCC 17025.</title>
        <authorList>
            <consortium name="US DOE Joint Genome Institute"/>
            <person name="Copeland A."/>
            <person name="Lucas S."/>
            <person name="Lapidus A."/>
            <person name="Barry K."/>
            <person name="Detter J.C."/>
            <person name="Glavina del Rio T."/>
            <person name="Hammon N."/>
            <person name="Israni S."/>
            <person name="Dalin E."/>
            <person name="Tice H."/>
            <person name="Pitluck S."/>
            <person name="Chertkov O."/>
            <person name="Brettin T."/>
            <person name="Bruce D."/>
            <person name="Han C."/>
            <person name="Schmutz J."/>
            <person name="Larimer F."/>
            <person name="Land M."/>
            <person name="Hauser L."/>
            <person name="Kyrpides N."/>
            <person name="Kim E."/>
            <person name="Richardson P."/>
            <person name="Mackenzie C."/>
            <person name="Choudhary M."/>
            <person name="Donohue T.J."/>
            <person name="Kaplan S."/>
        </authorList>
    </citation>
    <scope>NUCLEOTIDE SEQUENCE [LARGE SCALE GENOMIC DNA]</scope>
    <source>
        <strain>ATCC 17025 / ATH 2.4.3</strain>
    </source>
</reference>
<keyword id="KW-0414">Isoprene biosynthesis</keyword>
<keyword id="KW-0464">Manganese</keyword>
<keyword id="KW-0479">Metal-binding</keyword>
<keyword id="KW-0521">NADP</keyword>
<keyword id="KW-0560">Oxidoreductase</keyword>
<feature type="chain" id="PRO_1000124111" description="1-deoxy-D-xylulose 5-phosphate reductoisomerase">
    <location>
        <begin position="1"/>
        <end position="394"/>
    </location>
</feature>
<feature type="binding site" evidence="1">
    <location>
        <position position="10"/>
    </location>
    <ligand>
        <name>NADPH</name>
        <dbReference type="ChEBI" id="CHEBI:57783"/>
    </ligand>
</feature>
<feature type="binding site" evidence="1">
    <location>
        <position position="11"/>
    </location>
    <ligand>
        <name>NADPH</name>
        <dbReference type="ChEBI" id="CHEBI:57783"/>
    </ligand>
</feature>
<feature type="binding site" evidence="1">
    <location>
        <position position="12"/>
    </location>
    <ligand>
        <name>NADPH</name>
        <dbReference type="ChEBI" id="CHEBI:57783"/>
    </ligand>
</feature>
<feature type="binding site" evidence="1">
    <location>
        <position position="13"/>
    </location>
    <ligand>
        <name>NADPH</name>
        <dbReference type="ChEBI" id="CHEBI:57783"/>
    </ligand>
</feature>
<feature type="binding site" evidence="1">
    <location>
        <position position="38"/>
    </location>
    <ligand>
        <name>NADPH</name>
        <dbReference type="ChEBI" id="CHEBI:57783"/>
    </ligand>
</feature>
<feature type="binding site" evidence="1">
    <location>
        <position position="39"/>
    </location>
    <ligand>
        <name>NADPH</name>
        <dbReference type="ChEBI" id="CHEBI:57783"/>
    </ligand>
</feature>
<feature type="binding site" evidence="1">
    <location>
        <position position="40"/>
    </location>
    <ligand>
        <name>NADPH</name>
        <dbReference type="ChEBI" id="CHEBI:57783"/>
    </ligand>
</feature>
<feature type="binding site" evidence="1">
    <location>
        <position position="123"/>
    </location>
    <ligand>
        <name>NADPH</name>
        <dbReference type="ChEBI" id="CHEBI:57783"/>
    </ligand>
</feature>
<feature type="binding site" evidence="1">
    <location>
        <position position="124"/>
    </location>
    <ligand>
        <name>1-deoxy-D-xylulose 5-phosphate</name>
        <dbReference type="ChEBI" id="CHEBI:57792"/>
    </ligand>
</feature>
<feature type="binding site" evidence="1">
    <location>
        <position position="125"/>
    </location>
    <ligand>
        <name>NADPH</name>
        <dbReference type="ChEBI" id="CHEBI:57783"/>
    </ligand>
</feature>
<feature type="binding site" evidence="1">
    <location>
        <position position="149"/>
    </location>
    <ligand>
        <name>Mn(2+)</name>
        <dbReference type="ChEBI" id="CHEBI:29035"/>
    </ligand>
</feature>
<feature type="binding site" evidence="1">
    <location>
        <position position="150"/>
    </location>
    <ligand>
        <name>1-deoxy-D-xylulose 5-phosphate</name>
        <dbReference type="ChEBI" id="CHEBI:57792"/>
    </ligand>
</feature>
<feature type="binding site" evidence="1">
    <location>
        <position position="151"/>
    </location>
    <ligand>
        <name>1-deoxy-D-xylulose 5-phosphate</name>
        <dbReference type="ChEBI" id="CHEBI:57792"/>
    </ligand>
</feature>
<feature type="binding site" evidence="1">
    <location>
        <position position="151"/>
    </location>
    <ligand>
        <name>Mn(2+)</name>
        <dbReference type="ChEBI" id="CHEBI:29035"/>
    </ligand>
</feature>
<feature type="binding site" evidence="1">
    <location>
        <position position="175"/>
    </location>
    <ligand>
        <name>1-deoxy-D-xylulose 5-phosphate</name>
        <dbReference type="ChEBI" id="CHEBI:57792"/>
    </ligand>
</feature>
<feature type="binding site" evidence="1">
    <location>
        <position position="198"/>
    </location>
    <ligand>
        <name>1-deoxy-D-xylulose 5-phosphate</name>
        <dbReference type="ChEBI" id="CHEBI:57792"/>
    </ligand>
</feature>
<feature type="binding site" evidence="1">
    <location>
        <position position="204"/>
    </location>
    <ligand>
        <name>NADPH</name>
        <dbReference type="ChEBI" id="CHEBI:57783"/>
    </ligand>
</feature>
<feature type="binding site" evidence="1">
    <location>
        <position position="211"/>
    </location>
    <ligand>
        <name>1-deoxy-D-xylulose 5-phosphate</name>
        <dbReference type="ChEBI" id="CHEBI:57792"/>
    </ligand>
</feature>
<feature type="binding site" evidence="1">
    <location>
        <position position="216"/>
    </location>
    <ligand>
        <name>1-deoxy-D-xylulose 5-phosphate</name>
        <dbReference type="ChEBI" id="CHEBI:57792"/>
    </ligand>
</feature>
<feature type="binding site" evidence="1">
    <location>
        <position position="217"/>
    </location>
    <ligand>
        <name>1-deoxy-D-xylulose 5-phosphate</name>
        <dbReference type="ChEBI" id="CHEBI:57792"/>
    </ligand>
</feature>
<feature type="binding site" evidence="1">
    <location>
        <position position="220"/>
    </location>
    <ligand>
        <name>1-deoxy-D-xylulose 5-phosphate</name>
        <dbReference type="ChEBI" id="CHEBI:57792"/>
    </ligand>
</feature>
<feature type="binding site" evidence="1">
    <location>
        <position position="220"/>
    </location>
    <ligand>
        <name>Mn(2+)</name>
        <dbReference type="ChEBI" id="CHEBI:29035"/>
    </ligand>
</feature>
<gene>
    <name evidence="1" type="primary">dxr</name>
    <name type="ordered locus">Rsph17025_2149</name>
</gene>
<dbReference type="EC" id="1.1.1.267" evidence="1"/>
<dbReference type="EMBL" id="CP000661">
    <property type="protein sequence ID" value="ABP71039.1"/>
    <property type="molecule type" value="Genomic_DNA"/>
</dbReference>
<dbReference type="SMR" id="A4WUH5"/>
<dbReference type="STRING" id="349102.Rsph17025_2149"/>
<dbReference type="KEGG" id="rsq:Rsph17025_2149"/>
<dbReference type="eggNOG" id="COG0743">
    <property type="taxonomic scope" value="Bacteria"/>
</dbReference>
<dbReference type="HOGENOM" id="CLU_035714_4_0_5"/>
<dbReference type="BioCyc" id="RSPH349102:G1G8M-2218-MONOMER"/>
<dbReference type="UniPathway" id="UPA00056">
    <property type="reaction ID" value="UER00092"/>
</dbReference>
<dbReference type="GO" id="GO:0030604">
    <property type="term" value="F:1-deoxy-D-xylulose-5-phosphate reductoisomerase activity"/>
    <property type="evidence" value="ECO:0007669"/>
    <property type="project" value="UniProtKB-UniRule"/>
</dbReference>
<dbReference type="GO" id="GO:0030145">
    <property type="term" value="F:manganese ion binding"/>
    <property type="evidence" value="ECO:0007669"/>
    <property type="project" value="TreeGrafter"/>
</dbReference>
<dbReference type="GO" id="GO:0070402">
    <property type="term" value="F:NADPH binding"/>
    <property type="evidence" value="ECO:0007669"/>
    <property type="project" value="InterPro"/>
</dbReference>
<dbReference type="GO" id="GO:0051484">
    <property type="term" value="P:isopentenyl diphosphate biosynthetic process, methylerythritol 4-phosphate pathway involved in terpenoid biosynthetic process"/>
    <property type="evidence" value="ECO:0007669"/>
    <property type="project" value="TreeGrafter"/>
</dbReference>
<dbReference type="FunFam" id="3.40.50.720:FF:000045">
    <property type="entry name" value="1-deoxy-D-xylulose 5-phosphate reductoisomerase"/>
    <property type="match status" value="1"/>
</dbReference>
<dbReference type="Gene3D" id="1.10.1740.10">
    <property type="match status" value="1"/>
</dbReference>
<dbReference type="Gene3D" id="3.40.50.720">
    <property type="entry name" value="NAD(P)-binding Rossmann-like Domain"/>
    <property type="match status" value="1"/>
</dbReference>
<dbReference type="HAMAP" id="MF_00183">
    <property type="entry name" value="DXP_reductoisom"/>
    <property type="match status" value="1"/>
</dbReference>
<dbReference type="InterPro" id="IPR003821">
    <property type="entry name" value="DXP_reductoisomerase"/>
</dbReference>
<dbReference type="InterPro" id="IPR013644">
    <property type="entry name" value="DXP_reductoisomerase_C"/>
</dbReference>
<dbReference type="InterPro" id="IPR013512">
    <property type="entry name" value="DXP_reductoisomerase_N"/>
</dbReference>
<dbReference type="InterPro" id="IPR026877">
    <property type="entry name" value="DXPR_C"/>
</dbReference>
<dbReference type="InterPro" id="IPR036169">
    <property type="entry name" value="DXPR_C_sf"/>
</dbReference>
<dbReference type="InterPro" id="IPR036291">
    <property type="entry name" value="NAD(P)-bd_dom_sf"/>
</dbReference>
<dbReference type="NCBIfam" id="TIGR00243">
    <property type="entry name" value="Dxr"/>
    <property type="match status" value="1"/>
</dbReference>
<dbReference type="PANTHER" id="PTHR30525">
    <property type="entry name" value="1-DEOXY-D-XYLULOSE 5-PHOSPHATE REDUCTOISOMERASE"/>
    <property type="match status" value="1"/>
</dbReference>
<dbReference type="PANTHER" id="PTHR30525:SF0">
    <property type="entry name" value="1-DEOXY-D-XYLULOSE 5-PHOSPHATE REDUCTOISOMERASE, CHLOROPLASTIC"/>
    <property type="match status" value="1"/>
</dbReference>
<dbReference type="Pfam" id="PF08436">
    <property type="entry name" value="DXP_redisom_C"/>
    <property type="match status" value="1"/>
</dbReference>
<dbReference type="Pfam" id="PF02670">
    <property type="entry name" value="DXP_reductoisom"/>
    <property type="match status" value="1"/>
</dbReference>
<dbReference type="Pfam" id="PF13288">
    <property type="entry name" value="DXPR_C"/>
    <property type="match status" value="1"/>
</dbReference>
<dbReference type="PIRSF" id="PIRSF006205">
    <property type="entry name" value="Dxp_reductismrs"/>
    <property type="match status" value="1"/>
</dbReference>
<dbReference type="SUPFAM" id="SSF69055">
    <property type="entry name" value="1-deoxy-D-xylulose-5-phosphate reductoisomerase, C-terminal domain"/>
    <property type="match status" value="1"/>
</dbReference>
<dbReference type="SUPFAM" id="SSF55347">
    <property type="entry name" value="Glyceraldehyde-3-phosphate dehydrogenase-like, C-terminal domain"/>
    <property type="match status" value="1"/>
</dbReference>
<dbReference type="SUPFAM" id="SSF51735">
    <property type="entry name" value="NAD(P)-binding Rossmann-fold domains"/>
    <property type="match status" value="1"/>
</dbReference>